<accession>P80071</accession>
<comment type="subunit">
    <text>Heterodimer of a common alpha chain and a unique beta chain which confers biological specificity to thyrotropin, lutropin, follitropin and gonadotropin.</text>
</comment>
<comment type="subcellular location">
    <subcellularLocation>
        <location>Secreted</location>
    </subcellularLocation>
</comment>
<comment type="similarity">
    <text evidence="2">Belongs to the glycoprotein hormones subunit beta family.</text>
</comment>
<gene>
    <name type="primary">lhb</name>
</gene>
<reference key="1">
    <citation type="journal article" date="1992" name="Eur. J. Biochem.">
        <title>Amphibian lutropin from the bullfrog Rana catesbeiana. Complete amino acid sequence of the beta subunit.</title>
        <authorList>
            <person name="Hiroaki H."/>
            <person name="Tomoko H."/>
            <person name="Yoichi H."/>
        </authorList>
    </citation>
    <scope>PROTEIN SEQUENCE</scope>
</reference>
<name>LSHB_AQUCT</name>
<keyword id="KW-0903">Direct protein sequencing</keyword>
<keyword id="KW-1015">Disulfide bond</keyword>
<keyword id="KW-0325">Glycoprotein</keyword>
<keyword id="KW-0372">Hormone</keyword>
<keyword id="KW-0964">Secreted</keyword>
<evidence type="ECO:0000250" key="1"/>
<evidence type="ECO:0000305" key="2"/>
<protein>
    <recommendedName>
        <fullName>Lutropin subunit beta</fullName>
        <shortName>Lutropin beta chain</shortName>
    </recommendedName>
    <alternativeName>
        <fullName>Luteinizing hormone subunit beta</fullName>
        <shortName>LH-B</shortName>
        <shortName>LSH-B</shortName>
        <shortName>LSH-beta</shortName>
    </alternativeName>
</protein>
<sequence length="112" mass="12676">RHVCHLANATISAEKDHCPVCITFTTSICTGYCQTMDPVYKTALSSFKQNICTYKEIRYDTIKLPDCLPGTDPFFTYPVALSCYCDLCKMDYSDCTVESSEPDVCMKRRISI</sequence>
<organism>
    <name type="scientific">Aquarana catesbeiana</name>
    <name type="common">American bullfrog</name>
    <name type="synonym">Rana catesbeiana</name>
    <dbReference type="NCBI Taxonomy" id="8400"/>
    <lineage>
        <taxon>Eukaryota</taxon>
        <taxon>Metazoa</taxon>
        <taxon>Chordata</taxon>
        <taxon>Craniata</taxon>
        <taxon>Vertebrata</taxon>
        <taxon>Euteleostomi</taxon>
        <taxon>Amphibia</taxon>
        <taxon>Batrachia</taxon>
        <taxon>Anura</taxon>
        <taxon>Neobatrachia</taxon>
        <taxon>Ranoidea</taxon>
        <taxon>Ranidae</taxon>
        <taxon>Aquarana</taxon>
    </lineage>
</organism>
<proteinExistence type="evidence at protein level"/>
<feature type="chain" id="PRO_0000149043" description="Lutropin subunit beta">
    <location>
        <begin position="1"/>
        <end position="112"/>
    </location>
</feature>
<feature type="glycosylation site" id="CAR_000047" description="N-linked (GlcNAc...) asparagine">
    <location>
        <position position="8"/>
    </location>
</feature>
<feature type="disulfide bond" evidence="1">
    <location>
        <begin position="4"/>
        <end position="52"/>
    </location>
</feature>
<feature type="disulfide bond" evidence="1">
    <location>
        <begin position="18"/>
        <end position="67"/>
    </location>
</feature>
<feature type="disulfide bond" evidence="1">
    <location>
        <begin position="21"/>
        <end position="105"/>
    </location>
</feature>
<feature type="disulfide bond" evidence="1">
    <location>
        <begin position="29"/>
        <end position="83"/>
    </location>
</feature>
<feature type="disulfide bond" evidence="1">
    <location>
        <begin position="33"/>
        <end position="85"/>
    </location>
</feature>
<feature type="disulfide bond" evidence="1">
    <location>
        <begin position="88"/>
        <end position="95"/>
    </location>
</feature>
<dbReference type="PIR" id="S21196">
    <property type="entry name" value="S21196"/>
</dbReference>
<dbReference type="SMR" id="P80071"/>
<dbReference type="GlyConnect" id="351">
    <property type="glycosylation" value="1 N-Linked glycan (1 site)"/>
</dbReference>
<dbReference type="GlyCosmos" id="P80071">
    <property type="glycosylation" value="1 site, 2 glycans"/>
</dbReference>
<dbReference type="GO" id="GO:0005737">
    <property type="term" value="C:cytoplasm"/>
    <property type="evidence" value="ECO:0007669"/>
    <property type="project" value="TreeGrafter"/>
</dbReference>
<dbReference type="GO" id="GO:0005615">
    <property type="term" value="C:extracellular space"/>
    <property type="evidence" value="ECO:0007669"/>
    <property type="project" value="TreeGrafter"/>
</dbReference>
<dbReference type="GO" id="GO:0005179">
    <property type="term" value="F:hormone activity"/>
    <property type="evidence" value="ECO:0007669"/>
    <property type="project" value="UniProtKB-KW"/>
</dbReference>
<dbReference type="GO" id="GO:0007186">
    <property type="term" value="P:G protein-coupled receptor signaling pathway"/>
    <property type="evidence" value="ECO:0007669"/>
    <property type="project" value="TreeGrafter"/>
</dbReference>
<dbReference type="CDD" id="cd00069">
    <property type="entry name" value="GHB_like"/>
    <property type="match status" value="1"/>
</dbReference>
<dbReference type="FunFam" id="2.10.90.10:FF:000007">
    <property type="entry name" value="Luteinizing hormone beta subunit"/>
    <property type="match status" value="1"/>
</dbReference>
<dbReference type="Gene3D" id="2.10.90.10">
    <property type="entry name" value="Cystine-knot cytokines"/>
    <property type="match status" value="1"/>
</dbReference>
<dbReference type="InterPro" id="IPR029034">
    <property type="entry name" value="Cystine-knot_cytokine"/>
</dbReference>
<dbReference type="InterPro" id="IPR006208">
    <property type="entry name" value="Glyco_hormone_CN"/>
</dbReference>
<dbReference type="InterPro" id="IPR001545">
    <property type="entry name" value="Gonadotropin_bsu"/>
</dbReference>
<dbReference type="InterPro" id="IPR018245">
    <property type="entry name" value="Gonadotropin_bsu_CS"/>
</dbReference>
<dbReference type="PANTHER" id="PTHR11515">
    <property type="entry name" value="GLYCOPROTEIN HORMONE BETA CHAIN"/>
    <property type="match status" value="1"/>
</dbReference>
<dbReference type="PANTHER" id="PTHR11515:SF11">
    <property type="entry name" value="LUTROPIN SUBUNIT BETA"/>
    <property type="match status" value="1"/>
</dbReference>
<dbReference type="Pfam" id="PF00007">
    <property type="entry name" value="Cys_knot"/>
    <property type="match status" value="1"/>
</dbReference>
<dbReference type="SMART" id="SM00068">
    <property type="entry name" value="GHB"/>
    <property type="match status" value="1"/>
</dbReference>
<dbReference type="SUPFAM" id="SSF57501">
    <property type="entry name" value="Cystine-knot cytokines"/>
    <property type="match status" value="1"/>
</dbReference>
<dbReference type="PROSITE" id="PS00261">
    <property type="entry name" value="GLYCO_HORMONE_BETA_1"/>
    <property type="match status" value="1"/>
</dbReference>
<dbReference type="PROSITE" id="PS00689">
    <property type="entry name" value="GLYCO_HORMONE_BETA_2"/>
    <property type="match status" value="1"/>
</dbReference>